<evidence type="ECO:0000250" key="1">
    <source>
        <dbReference type="UniProtKB" id="O48814"/>
    </source>
</evidence>
<evidence type="ECO:0000250" key="2">
    <source>
        <dbReference type="UniProtKB" id="Q9FE20"/>
    </source>
</evidence>
<evidence type="ECO:0000255" key="3">
    <source>
        <dbReference type="PROSITE-ProRule" id="PRU00159"/>
    </source>
</evidence>
<evidence type="ECO:0000256" key="4">
    <source>
        <dbReference type="SAM" id="MobiDB-lite"/>
    </source>
</evidence>
<evidence type="ECO:0000269" key="5">
    <source>
    </source>
</evidence>
<evidence type="ECO:0000269" key="6">
    <source>
    </source>
</evidence>
<evidence type="ECO:0000269" key="7">
    <source>
    </source>
</evidence>
<evidence type="ECO:0000269" key="8">
    <source>
    </source>
</evidence>
<evidence type="ECO:0000269" key="9">
    <source>
    </source>
</evidence>
<evidence type="ECO:0000269" key="10">
    <source>
    </source>
</evidence>
<evidence type="ECO:0000269" key="11">
    <source>
    </source>
</evidence>
<evidence type="ECO:0000303" key="12">
    <source>
    </source>
</evidence>
<evidence type="ECO:0000303" key="13">
    <source>
    </source>
</evidence>
<evidence type="ECO:0000303" key="14">
    <source>
    </source>
</evidence>
<evidence type="ECO:0000305" key="15"/>
<evidence type="ECO:0000305" key="16">
    <source>
    </source>
</evidence>
<evidence type="ECO:0000312" key="17">
    <source>
        <dbReference type="Araport" id="AT1G14370"/>
    </source>
</evidence>
<evidence type="ECO:0000312" key="18">
    <source>
        <dbReference type="EMBL" id="AAF43937.1"/>
    </source>
</evidence>
<evidence type="ECO:0007744" key="19">
    <source>
        <dbReference type="PDB" id="6J5T"/>
    </source>
</evidence>
<evidence type="ECO:0007744" key="20">
    <source>
        <dbReference type="PDB" id="6J5U"/>
    </source>
</evidence>
<evidence type="ECO:0007744" key="21">
    <source>
        <dbReference type="PDB" id="6J5V"/>
    </source>
</evidence>
<evidence type="ECO:0007744" key="22">
    <source>
        <dbReference type="PDB" id="6J6I"/>
    </source>
</evidence>
<evidence type="ECO:0007829" key="23">
    <source>
        <dbReference type="PDB" id="6J5T"/>
    </source>
</evidence>
<gene>
    <name evidence="12" type="primary">PBL2</name>
    <name evidence="14" type="synonym">APK2A</name>
    <name evidence="13" type="synonym">KIN1</name>
    <name evidence="17" type="ordered locus">At1g14370</name>
    <name evidence="18" type="ORF">F14L17.14</name>
</gene>
<sequence>MGNCLDSSAKVDNSNHSPHANSASSGSKVSSKTSRSTGPSGLSTTSYSTDSSFGPLPTLRTEGEILSSPNLKAFTFNELKNATKNFRQDNLLGEGGFGCVFKGWIDQTSLTASRPGSGIVVAVKQLKPEGFQGHKEWLTEVNYLGQLSHPNLVLLVGYCAEGENRLLVYEFMPKGSLENHLFRRGAQPLTWAIRMKVAVGAAKGLTFLHEAKSQVIYRDFKAANILLDADFNAKLSDFGLAKAGPTGDNTHVSTKVIGTHGYAAPEYVATGRLTAKSDVYSFGVVLLELISGRRAMDNSNGGNEYSLVDWATPYLGDKRKLFRIMDTKLGGQYPQKGAFTAANLALQCLNPDAKLRPKMSEVLVTLEQLESVAKPGTKHTQMESPRFHHSSVMQKSPVRYSHDRPLLHMTPGASPLPSYTQSPRVR</sequence>
<proteinExistence type="evidence at protein level"/>
<accession>O49839</accession>
<comment type="function">
    <text evidence="5 7 8 9">Involved in disease resistance signaling (PubMed:20413097, PubMed:23951354, PubMed:26355215). Contributes to pathogen-associated molecular pattern (PAMP)-triggered immunity (PTI) signaling and defense responses downstream of FLS2 (PubMed:20413097). Acts as a BIK1 decoy and enables Xanthomonas campestris AvrAC/XopAC detection; X.campestris effector AvrAC/XopAC-mediated uridylylation promotes the formation of a complex with RKS1 and RPP13L4/ZAR1 which, in turn, activates effector-triggered immunity (ETI) against X.campestris (PubMed:23951354, PubMed:26355215, PubMed:30948526). Promotes, when uridylylated by AvrAC/XopAC, the release of ADP from the inactive RKS1-ZAR1 complex, thus activating the resistosome (PubMed:30948526).</text>
</comment>
<comment type="catalytic activity">
    <reaction evidence="15">
        <text>L-seryl-[protein] + ATP = O-phospho-L-seryl-[protein] + ADP + H(+)</text>
        <dbReference type="Rhea" id="RHEA:17989"/>
        <dbReference type="Rhea" id="RHEA-COMP:9863"/>
        <dbReference type="Rhea" id="RHEA-COMP:11604"/>
        <dbReference type="ChEBI" id="CHEBI:15378"/>
        <dbReference type="ChEBI" id="CHEBI:29999"/>
        <dbReference type="ChEBI" id="CHEBI:30616"/>
        <dbReference type="ChEBI" id="CHEBI:83421"/>
        <dbReference type="ChEBI" id="CHEBI:456216"/>
        <dbReference type="EC" id="2.7.11.1"/>
    </reaction>
</comment>
<comment type="catalytic activity">
    <reaction evidence="15">
        <text>L-threonyl-[protein] + ATP = O-phospho-L-threonyl-[protein] + ADP + H(+)</text>
        <dbReference type="Rhea" id="RHEA:46608"/>
        <dbReference type="Rhea" id="RHEA-COMP:11060"/>
        <dbReference type="Rhea" id="RHEA-COMP:11605"/>
        <dbReference type="ChEBI" id="CHEBI:15378"/>
        <dbReference type="ChEBI" id="CHEBI:30013"/>
        <dbReference type="ChEBI" id="CHEBI:30616"/>
        <dbReference type="ChEBI" id="CHEBI:61977"/>
        <dbReference type="ChEBI" id="CHEBI:456216"/>
        <dbReference type="EC" id="2.7.11.1"/>
    </reaction>
</comment>
<comment type="subunit">
    <text evidence="5 7 8 9 10">Interacts with FLS2 (PubMed:20413097). Interacts with the Xanthomonas campestris effector XopAC/AvrAC; the recognition of X.campestris effector XopAC/AvrAC requires the presence of RKS1 and RPP13L4/ZAR1 (PubMed:23951354, PubMed:26355215). Component of a stable high-order oligomeric complex made of RKS1 and RPP13L4/ZAR1 which recruits X.campestris effector XopAC/AvrAC-mediated uridylylated PBL2 in the presence of ATP to form a wheel-like pentameric resistosome; this complex triggers immunity toward X.campestris in vascular tissues (PubMed:26355215, PubMed:30948526, PubMed:30948527). Binds to RKS1 when uridylylated (PubMed:30948526).</text>
</comment>
<comment type="subcellular location">
    <subcellularLocation>
        <location evidence="6">Cell membrane</location>
        <topology evidence="16">Lipid-anchor</topology>
    </subcellularLocation>
    <subcellularLocation>
        <location evidence="6">Nucleus</location>
    </subcellularLocation>
    <text evidence="6">Predominantly localized at the plasma membrane.</text>
</comment>
<comment type="tissue specificity">
    <text evidence="11">Strongly expressed in leaves, moderately in roots, and barely in flowers, mostly in pedicels.</text>
</comment>
<comment type="induction">
    <text evidence="5 11">Negatively regulated by AGAMOUS (AG) in floral organ primordia (PubMed:9150601). Induced by flagellin (flg22) (PubMed:20413097).</text>
</comment>
<comment type="PTM">
    <text evidence="8">Uridylylated at Ser-253 and Thr-254 by Xanthomonas campestris effector AvrAC/XopAC; this uridylylation is necessary for specific recruitment to RKS1 and to trigger immunity.</text>
</comment>
<comment type="disruption phenotype">
    <text evidence="5 8">No visible phenotype under normal growth conditions (PubMed:20413097). Increased sensitivity to the pathogenic biotrophic bacteria Xanthomonas campestris pv. campestris (Xcc) in vascular tissues (PubMed:26355215).</text>
</comment>
<comment type="similarity">
    <text evidence="3">Belongs to the protein kinase superfamily. Ser/Thr protein kinase family.</text>
</comment>
<organism>
    <name type="scientific">Arabidopsis thaliana</name>
    <name type="common">Mouse-ear cress</name>
    <dbReference type="NCBI Taxonomy" id="3702"/>
    <lineage>
        <taxon>Eukaryota</taxon>
        <taxon>Viridiplantae</taxon>
        <taxon>Streptophyta</taxon>
        <taxon>Embryophyta</taxon>
        <taxon>Tracheophyta</taxon>
        <taxon>Spermatophyta</taxon>
        <taxon>Magnoliopsida</taxon>
        <taxon>eudicotyledons</taxon>
        <taxon>Gunneridae</taxon>
        <taxon>Pentapetalae</taxon>
        <taxon>rosids</taxon>
        <taxon>malvids</taxon>
        <taxon>Brassicales</taxon>
        <taxon>Brassicaceae</taxon>
        <taxon>Camelineae</taxon>
        <taxon>Arabidopsis</taxon>
    </lineage>
</organism>
<name>PBL2_ARATH</name>
<feature type="initiator methionine" description="Removed" evidence="16">
    <location>
        <position position="1"/>
    </location>
</feature>
<feature type="chain" id="PRO_0000389476" description="Probable serine/threonine-protein kinase PBL2">
    <location>
        <begin position="2"/>
        <end position="426"/>
    </location>
</feature>
<feature type="domain" description="Protein kinase" evidence="3">
    <location>
        <begin position="86"/>
        <end position="369"/>
    </location>
</feature>
<feature type="region of interest" description="Disordered" evidence="4">
    <location>
        <begin position="1"/>
        <end position="54"/>
    </location>
</feature>
<feature type="region of interest" description="Disordered" evidence="4">
    <location>
        <begin position="374"/>
        <end position="426"/>
    </location>
</feature>
<feature type="compositionally biased region" description="Low complexity" evidence="4">
    <location>
        <begin position="14"/>
        <end position="38"/>
    </location>
</feature>
<feature type="compositionally biased region" description="Polar residues" evidence="4">
    <location>
        <begin position="39"/>
        <end position="52"/>
    </location>
</feature>
<feature type="compositionally biased region" description="Polar residues" evidence="4">
    <location>
        <begin position="417"/>
        <end position="426"/>
    </location>
</feature>
<feature type="active site" description="Proton acceptor" evidence="3">
    <location>
        <position position="219"/>
    </location>
</feature>
<feature type="binding site" evidence="3 9 10 19 20 21 22">
    <location>
        <begin position="92"/>
        <end position="100"/>
    </location>
    <ligand>
        <name>ATP</name>
        <dbReference type="ChEBI" id="CHEBI:30616"/>
    </ligand>
</feature>
<feature type="binding site" evidence="3">
    <location>
        <position position="124"/>
    </location>
    <ligand>
        <name>ATP</name>
        <dbReference type="ChEBI" id="CHEBI:30616"/>
    </ligand>
</feature>
<feature type="modified residue" description="Phosphothreonine" evidence="1">
    <location>
        <position position="75"/>
    </location>
</feature>
<feature type="modified residue" description="Phosphotyrosine" evidence="1">
    <location>
        <position position="169"/>
    </location>
</feature>
<feature type="modified residue" description="O-UMP-serine" evidence="8 9">
    <location>
        <position position="253"/>
    </location>
</feature>
<feature type="modified residue" description="Phosphoserine" evidence="1">
    <location>
        <position position="253"/>
    </location>
</feature>
<feature type="modified residue" description="O-UMP-threonine" evidence="8 9">
    <location>
        <position position="254"/>
    </location>
</feature>
<feature type="modified residue" description="Phosphothreonine" evidence="1">
    <location>
        <position position="254"/>
    </location>
</feature>
<feature type="modified residue" description="Phosphothreonine" evidence="1">
    <location>
        <position position="259"/>
    </location>
</feature>
<feature type="modified residue" description="Phosphotyrosine" evidence="1">
    <location>
        <position position="267"/>
    </location>
</feature>
<feature type="lipid moiety-binding region" description="N-myristoyl glycine" evidence="16">
    <location>
        <position position="2"/>
    </location>
</feature>
<feature type="lipid moiety-binding region" description="S-palmitoyl cysteine" evidence="2">
    <location>
        <position position="4"/>
    </location>
</feature>
<feature type="mutagenesis site" description="Drastic reduction of plasma membrane localization and strong increase of nuclear localization." evidence="6">
    <original>G</original>
    <variation>A</variation>
    <location>
        <position position="2"/>
    </location>
</feature>
<feature type="mutagenesis site" description="Normal uridylylation and cell death induction in response to the Xanthomonas campestris effector XopAC/AvrAC in the presence of RKS1 and RPP13L4/ZAR1." evidence="8">
    <original>K</original>
    <variation>E</variation>
    <location>
        <position position="124"/>
    </location>
</feature>
<feature type="mutagenesis site" description="Normal cell death induction in response to the Xanthomonas campestris effector XopAC/AvrAC in the presence of RKS1 and RPP13L4/ZAR1." evidence="8">
    <original>D</original>
    <variation>A</variation>
    <location>
        <position position="219"/>
    </location>
</feature>
<feature type="mutagenesis site" description="Normal cell death induction in response to the Xanthomonas campestris effector XopAC/AvrAC in the presence of RKS1 and RPP13L4/ZAR1." evidence="8">
    <original>G</original>
    <variation>R</variation>
    <location>
        <position position="247"/>
    </location>
</feature>
<feature type="mutagenesis site" description="Increased sensitivity to the pathogenic biotrophic bacteria Xanthomonas campestris pv. campestris (Xcc) in vascular tissues. Lost ability to trigger cell death in response to the Xanthomonas campestris effector XopAC/AvrAC in the presence of PBL2 and RKS1. Impaired Xanthomonas campestris effector AvrAC/XopAC-mediated uridylylation; when associated with A-254." evidence="8">
    <original>S</original>
    <variation>A</variation>
    <location>
        <position position="253"/>
    </location>
</feature>
<feature type="mutagenesis site" description="Increased sensitivity to the pathogenic biotrophic bacteria Xanthomonas campestris pv. campestris (Xcc) in vascular tissues. Lost ability to trigger cell death in response to the Xanthomonas campestris effector XopAC/AvrAC in the presence of PBL2 and RKS1. Impaired Xanthomonas campestris effector AvrAC/XopAC-mediated uridylylation; when associated with A-253." evidence="8">
    <original>T</original>
    <variation>A</variation>
    <location>
        <position position="254"/>
    </location>
</feature>
<feature type="mutagenesis site" description="Normal cell death induction in response to the Xanthomonas campestris effector XopAC/AvrAC in the presence of RKS1 and RPP13L4/ZAR1." evidence="8">
    <original>Y</original>
    <variation>A</variation>
    <location>
        <position position="262"/>
    </location>
</feature>
<feature type="helix" evidence="23">
    <location>
        <begin position="138"/>
        <end position="145"/>
    </location>
</feature>
<feature type="strand" evidence="23">
    <location>
        <begin position="162"/>
        <end position="164"/>
    </location>
</feature>
<feature type="turn" evidence="23">
    <location>
        <begin position="178"/>
        <end position="180"/>
    </location>
</feature>
<feature type="strand" evidence="23">
    <location>
        <begin position="184"/>
        <end position="186"/>
    </location>
</feature>
<feature type="helix" evidence="23">
    <location>
        <begin position="194"/>
        <end position="210"/>
    </location>
</feature>
<feature type="strand" evidence="23">
    <location>
        <begin position="212"/>
        <end position="214"/>
    </location>
</feature>
<feature type="turn" evidence="23">
    <location>
        <begin position="222"/>
        <end position="224"/>
    </location>
</feature>
<feature type="helix" evidence="23">
    <location>
        <begin position="265"/>
        <end position="269"/>
    </location>
</feature>
<feature type="helix" evidence="23">
    <location>
        <begin position="276"/>
        <end position="291"/>
    </location>
</feature>
<feature type="helix" evidence="23">
    <location>
        <begin position="337"/>
        <end position="348"/>
    </location>
</feature>
<feature type="strand" evidence="23">
    <location>
        <begin position="351"/>
        <end position="355"/>
    </location>
</feature>
<feature type="helix" evidence="23">
    <location>
        <begin position="359"/>
        <end position="364"/>
    </location>
</feature>
<protein>
    <recommendedName>
        <fullName evidence="15">Probable serine/threonine-protein kinase PBL2</fullName>
        <ecNumber evidence="15">2.7.11.1</ecNumber>
    </recommendedName>
    <alternativeName>
        <fullName evidence="12">PBS1-like protein 2</fullName>
    </alternativeName>
    <alternativeName>
        <fullName evidence="15">Protein kinase 2A</fullName>
    </alternativeName>
</protein>
<dbReference type="EC" id="2.7.11.1" evidence="15"/>
<dbReference type="EMBL" id="D88206">
    <property type="protein sequence ID" value="BAA24694.1"/>
    <property type="molecule type" value="mRNA"/>
</dbReference>
<dbReference type="EMBL" id="AC012188">
    <property type="protein sequence ID" value="AAF43937.1"/>
    <property type="molecule type" value="Genomic_DNA"/>
</dbReference>
<dbReference type="EMBL" id="CP002684">
    <property type="protein sequence ID" value="AEE29153.1"/>
    <property type="molecule type" value="Genomic_DNA"/>
</dbReference>
<dbReference type="EMBL" id="AF334731">
    <property type="protein sequence ID" value="AAG50109.1"/>
    <property type="molecule type" value="mRNA"/>
</dbReference>
<dbReference type="EMBL" id="AY059894">
    <property type="protein sequence ID" value="AAL24376.1"/>
    <property type="molecule type" value="mRNA"/>
</dbReference>
<dbReference type="PIR" id="T52285">
    <property type="entry name" value="T52285"/>
</dbReference>
<dbReference type="RefSeq" id="NP_172889.1">
    <property type="nucleotide sequence ID" value="NM_101304.4"/>
</dbReference>
<dbReference type="PDB" id="6J5T">
    <property type="method" value="EM"/>
    <property type="resolution" value="3.40 A"/>
    <property type="chains" value="A/D/I/J/M=1-426"/>
</dbReference>
<dbReference type="PDB" id="6J5U">
    <property type="method" value="EM"/>
    <property type="resolution" value="3.90 A"/>
    <property type="chains" value="C=1-426"/>
</dbReference>
<dbReference type="PDB" id="6J5V">
    <property type="method" value="EM"/>
    <property type="resolution" value="4.25 A"/>
    <property type="chains" value="C=1-426"/>
</dbReference>
<dbReference type="PDB" id="6J6I">
    <property type="method" value="EM"/>
    <property type="resolution" value="3.70 A"/>
    <property type="chains" value="A=1-426"/>
</dbReference>
<dbReference type="PDBsum" id="6J5T"/>
<dbReference type="PDBsum" id="6J5U"/>
<dbReference type="PDBsum" id="6J5V"/>
<dbReference type="PDBsum" id="6J6I"/>
<dbReference type="EMDB" id="EMD-0680"/>
<dbReference type="EMDB" id="EMD-0681"/>
<dbReference type="EMDB" id="EMD-0682"/>
<dbReference type="EMDB" id="EMD-0688"/>
<dbReference type="SMR" id="O49839"/>
<dbReference type="BioGRID" id="23239">
    <property type="interactions" value="5"/>
</dbReference>
<dbReference type="FunCoup" id="O49839">
    <property type="interactions" value="2909"/>
</dbReference>
<dbReference type="IntAct" id="O49839">
    <property type="interactions" value="5"/>
</dbReference>
<dbReference type="STRING" id="3702.O49839"/>
<dbReference type="TCDB" id="1.A.87.2.18">
    <property type="family name" value="the mechanosensitive calcium channel (mca) family"/>
</dbReference>
<dbReference type="GlyGen" id="O49839">
    <property type="glycosylation" value="1 site"/>
</dbReference>
<dbReference type="iPTMnet" id="O49839"/>
<dbReference type="PaxDb" id="3702-AT1G14370.1"/>
<dbReference type="ProteomicsDB" id="236279"/>
<dbReference type="EnsemblPlants" id="AT1G14370.1">
    <property type="protein sequence ID" value="AT1G14370.1"/>
    <property type="gene ID" value="AT1G14370"/>
</dbReference>
<dbReference type="GeneID" id="837999"/>
<dbReference type="Gramene" id="AT1G14370.1">
    <property type="protein sequence ID" value="AT1G14370.1"/>
    <property type="gene ID" value="AT1G14370"/>
</dbReference>
<dbReference type="KEGG" id="ath:AT1G14370"/>
<dbReference type="Araport" id="AT1G14370"/>
<dbReference type="TAIR" id="AT1G14370">
    <property type="gene designation" value="APK2A"/>
</dbReference>
<dbReference type="eggNOG" id="KOG1187">
    <property type="taxonomic scope" value="Eukaryota"/>
</dbReference>
<dbReference type="HOGENOM" id="CLU_000288_21_1_1"/>
<dbReference type="InParanoid" id="O49839"/>
<dbReference type="OMA" id="GWIDQTS"/>
<dbReference type="PhylomeDB" id="O49839"/>
<dbReference type="PRO" id="PR:O49839"/>
<dbReference type="Proteomes" id="UP000006548">
    <property type="component" value="Chromosome 1"/>
</dbReference>
<dbReference type="ExpressionAtlas" id="O49839">
    <property type="expression patterns" value="baseline and differential"/>
</dbReference>
<dbReference type="GO" id="GO:0005634">
    <property type="term" value="C:nucleus"/>
    <property type="evidence" value="ECO:0007669"/>
    <property type="project" value="UniProtKB-SubCell"/>
</dbReference>
<dbReference type="GO" id="GO:0005886">
    <property type="term" value="C:plasma membrane"/>
    <property type="evidence" value="ECO:0000314"/>
    <property type="project" value="TAIR"/>
</dbReference>
<dbReference type="GO" id="GO:0005524">
    <property type="term" value="F:ATP binding"/>
    <property type="evidence" value="ECO:0007669"/>
    <property type="project" value="UniProtKB-KW"/>
</dbReference>
<dbReference type="GO" id="GO:0106310">
    <property type="term" value="F:protein serine kinase activity"/>
    <property type="evidence" value="ECO:0007669"/>
    <property type="project" value="RHEA"/>
</dbReference>
<dbReference type="GO" id="GO:0004674">
    <property type="term" value="F:protein serine/threonine kinase activity"/>
    <property type="evidence" value="ECO:0007669"/>
    <property type="project" value="UniProtKB-KW"/>
</dbReference>
<dbReference type="GO" id="GO:0030957">
    <property type="term" value="F:Tat protein binding"/>
    <property type="evidence" value="ECO:0000353"/>
    <property type="project" value="UniProtKB"/>
</dbReference>
<dbReference type="GO" id="GO:0006952">
    <property type="term" value="P:defense response"/>
    <property type="evidence" value="ECO:0007669"/>
    <property type="project" value="UniProtKB-KW"/>
</dbReference>
<dbReference type="GO" id="GO:1900426">
    <property type="term" value="P:positive regulation of defense response to bacterium"/>
    <property type="evidence" value="ECO:0000315"/>
    <property type="project" value="UniProtKB"/>
</dbReference>
<dbReference type="CDD" id="cd14066">
    <property type="entry name" value="STKc_IRAK"/>
    <property type="match status" value="1"/>
</dbReference>
<dbReference type="FunFam" id="1.10.510.10:FF:000258">
    <property type="entry name" value="Probable serine/threonine-protein kinase PBL8"/>
    <property type="match status" value="1"/>
</dbReference>
<dbReference type="FunFam" id="3.30.200.20:FF:000228">
    <property type="entry name" value="Serine/threonine-protein kinase BIK1"/>
    <property type="match status" value="1"/>
</dbReference>
<dbReference type="Gene3D" id="3.30.200.20">
    <property type="entry name" value="Phosphorylase Kinase, domain 1"/>
    <property type="match status" value="1"/>
</dbReference>
<dbReference type="Gene3D" id="1.10.510.10">
    <property type="entry name" value="Transferase(Phosphotransferase) domain 1"/>
    <property type="match status" value="1"/>
</dbReference>
<dbReference type="InterPro" id="IPR011009">
    <property type="entry name" value="Kinase-like_dom_sf"/>
</dbReference>
<dbReference type="InterPro" id="IPR050823">
    <property type="entry name" value="Plant_Ser_Thr_Prot_Kinase"/>
</dbReference>
<dbReference type="InterPro" id="IPR000719">
    <property type="entry name" value="Prot_kinase_dom"/>
</dbReference>
<dbReference type="InterPro" id="IPR017441">
    <property type="entry name" value="Protein_kinase_ATP_BS"/>
</dbReference>
<dbReference type="InterPro" id="IPR001245">
    <property type="entry name" value="Ser-Thr/Tyr_kinase_cat_dom"/>
</dbReference>
<dbReference type="InterPro" id="IPR008271">
    <property type="entry name" value="Ser/Thr_kinase_AS"/>
</dbReference>
<dbReference type="PANTHER" id="PTHR45621">
    <property type="entry name" value="OS01G0588500 PROTEIN-RELATED"/>
    <property type="match status" value="1"/>
</dbReference>
<dbReference type="Pfam" id="PF07714">
    <property type="entry name" value="PK_Tyr_Ser-Thr"/>
    <property type="match status" value="1"/>
</dbReference>
<dbReference type="SUPFAM" id="SSF56112">
    <property type="entry name" value="Protein kinase-like (PK-like)"/>
    <property type="match status" value="1"/>
</dbReference>
<dbReference type="PROSITE" id="PS00107">
    <property type="entry name" value="PROTEIN_KINASE_ATP"/>
    <property type="match status" value="1"/>
</dbReference>
<dbReference type="PROSITE" id="PS50011">
    <property type="entry name" value="PROTEIN_KINASE_DOM"/>
    <property type="match status" value="1"/>
</dbReference>
<dbReference type="PROSITE" id="PS00108">
    <property type="entry name" value="PROTEIN_KINASE_ST"/>
    <property type="match status" value="1"/>
</dbReference>
<keyword id="KW-0002">3D-structure</keyword>
<keyword id="KW-0067">ATP-binding</keyword>
<keyword id="KW-1003">Cell membrane</keyword>
<keyword id="KW-0418">Kinase</keyword>
<keyword id="KW-0449">Lipoprotein</keyword>
<keyword id="KW-0472">Membrane</keyword>
<keyword id="KW-0519">Myristate</keyword>
<keyword id="KW-0547">Nucleotide-binding</keyword>
<keyword id="KW-0539">Nucleus</keyword>
<keyword id="KW-0564">Palmitate</keyword>
<keyword id="KW-0597">Phosphoprotein</keyword>
<keyword id="KW-0611">Plant defense</keyword>
<keyword id="KW-1185">Reference proteome</keyword>
<keyword id="KW-0723">Serine/threonine-protein kinase</keyword>
<keyword id="KW-0808">Transferase</keyword>
<reference key="1">
    <citation type="journal article" date="1997" name="Plant Cell Physiol.">
        <title>A serine/threonine protein kinase gene isolated by an in vivo binding procedure using the Arabidopsis floral homeotic gene product, AGAMOUS.</title>
        <authorList>
            <person name="Ito T."/>
            <person name="Takahashi N."/>
            <person name="Shimura Y."/>
            <person name="Okada K."/>
        </authorList>
    </citation>
    <scope>NUCLEOTIDE SEQUENCE [MRNA]</scope>
    <scope>REGULATION BY AGAMOUS</scope>
    <scope>TISSUE SPECIFICITY</scope>
    <source>
        <strain>cv. Landsberg erecta</strain>
    </source>
</reference>
<reference key="2">
    <citation type="journal article" date="2000" name="Nature">
        <title>Sequence and analysis of chromosome 1 of the plant Arabidopsis thaliana.</title>
        <authorList>
            <person name="Theologis A."/>
            <person name="Ecker J.R."/>
            <person name="Palm C.J."/>
            <person name="Federspiel N.A."/>
            <person name="Kaul S."/>
            <person name="White O."/>
            <person name="Alonso J."/>
            <person name="Altafi H."/>
            <person name="Araujo R."/>
            <person name="Bowman C.L."/>
            <person name="Brooks S.Y."/>
            <person name="Buehler E."/>
            <person name="Chan A."/>
            <person name="Chao Q."/>
            <person name="Chen H."/>
            <person name="Cheuk R.F."/>
            <person name="Chin C.W."/>
            <person name="Chung M.K."/>
            <person name="Conn L."/>
            <person name="Conway A.B."/>
            <person name="Conway A.R."/>
            <person name="Creasy T.H."/>
            <person name="Dewar K."/>
            <person name="Dunn P."/>
            <person name="Etgu P."/>
            <person name="Feldblyum T.V."/>
            <person name="Feng J.-D."/>
            <person name="Fong B."/>
            <person name="Fujii C.Y."/>
            <person name="Gill J.E."/>
            <person name="Goldsmith A.D."/>
            <person name="Haas B."/>
            <person name="Hansen N.F."/>
            <person name="Hughes B."/>
            <person name="Huizar L."/>
            <person name="Hunter J.L."/>
            <person name="Jenkins J."/>
            <person name="Johnson-Hopson C."/>
            <person name="Khan S."/>
            <person name="Khaykin E."/>
            <person name="Kim C.J."/>
            <person name="Koo H.L."/>
            <person name="Kremenetskaia I."/>
            <person name="Kurtz D.B."/>
            <person name="Kwan A."/>
            <person name="Lam B."/>
            <person name="Langin-Hooper S."/>
            <person name="Lee A."/>
            <person name="Lee J.M."/>
            <person name="Lenz C.A."/>
            <person name="Li J.H."/>
            <person name="Li Y.-P."/>
            <person name="Lin X."/>
            <person name="Liu S.X."/>
            <person name="Liu Z.A."/>
            <person name="Luros J.S."/>
            <person name="Maiti R."/>
            <person name="Marziali A."/>
            <person name="Militscher J."/>
            <person name="Miranda M."/>
            <person name="Nguyen M."/>
            <person name="Nierman W.C."/>
            <person name="Osborne B.I."/>
            <person name="Pai G."/>
            <person name="Peterson J."/>
            <person name="Pham P.K."/>
            <person name="Rizzo M."/>
            <person name="Rooney T."/>
            <person name="Rowley D."/>
            <person name="Sakano H."/>
            <person name="Salzberg S.L."/>
            <person name="Schwartz J.R."/>
            <person name="Shinn P."/>
            <person name="Southwick A.M."/>
            <person name="Sun H."/>
            <person name="Tallon L.J."/>
            <person name="Tambunga G."/>
            <person name="Toriumi M.J."/>
            <person name="Town C.D."/>
            <person name="Utterback T."/>
            <person name="Van Aken S."/>
            <person name="Vaysberg M."/>
            <person name="Vysotskaia V.S."/>
            <person name="Walker M."/>
            <person name="Wu D."/>
            <person name="Yu G."/>
            <person name="Fraser C.M."/>
            <person name="Venter J.C."/>
            <person name="Davis R.W."/>
        </authorList>
    </citation>
    <scope>NUCLEOTIDE SEQUENCE [LARGE SCALE GENOMIC DNA]</scope>
    <source>
        <strain>cv. Columbia</strain>
    </source>
</reference>
<reference key="3">
    <citation type="journal article" date="2017" name="Plant J.">
        <title>Araport11: a complete reannotation of the Arabidopsis thaliana reference genome.</title>
        <authorList>
            <person name="Cheng C.Y."/>
            <person name="Krishnakumar V."/>
            <person name="Chan A.P."/>
            <person name="Thibaud-Nissen F."/>
            <person name="Schobel S."/>
            <person name="Town C.D."/>
        </authorList>
    </citation>
    <scope>GENOME REANNOTATION</scope>
    <source>
        <strain>cv. Columbia</strain>
    </source>
</reference>
<reference key="4">
    <citation type="journal article" date="2003" name="Science">
        <title>Empirical analysis of transcriptional activity in the Arabidopsis genome.</title>
        <authorList>
            <person name="Yamada K."/>
            <person name="Lim J."/>
            <person name="Dale J.M."/>
            <person name="Chen H."/>
            <person name="Shinn P."/>
            <person name="Palm C.J."/>
            <person name="Southwick A.M."/>
            <person name="Wu H.C."/>
            <person name="Kim C.J."/>
            <person name="Nguyen M."/>
            <person name="Pham P.K."/>
            <person name="Cheuk R.F."/>
            <person name="Karlin-Newmann G."/>
            <person name="Liu S.X."/>
            <person name="Lam B."/>
            <person name="Sakano H."/>
            <person name="Wu T."/>
            <person name="Yu G."/>
            <person name="Miranda M."/>
            <person name="Quach H.L."/>
            <person name="Tripp M."/>
            <person name="Chang C.H."/>
            <person name="Lee J.M."/>
            <person name="Toriumi M.J."/>
            <person name="Chan M.M."/>
            <person name="Tang C.C."/>
            <person name="Onodera C.S."/>
            <person name="Deng J.M."/>
            <person name="Akiyama K."/>
            <person name="Ansari Y."/>
            <person name="Arakawa T."/>
            <person name="Banh J."/>
            <person name="Banno F."/>
            <person name="Bowser L."/>
            <person name="Brooks S.Y."/>
            <person name="Carninci P."/>
            <person name="Chao Q."/>
            <person name="Choy N."/>
            <person name="Enju A."/>
            <person name="Goldsmith A.D."/>
            <person name="Gurjal M."/>
            <person name="Hansen N.F."/>
            <person name="Hayashizaki Y."/>
            <person name="Johnson-Hopson C."/>
            <person name="Hsuan V.W."/>
            <person name="Iida K."/>
            <person name="Karnes M."/>
            <person name="Khan S."/>
            <person name="Koesema E."/>
            <person name="Ishida J."/>
            <person name="Jiang P.X."/>
            <person name="Jones T."/>
            <person name="Kawai J."/>
            <person name="Kamiya A."/>
            <person name="Meyers C."/>
            <person name="Nakajima M."/>
            <person name="Narusaka M."/>
            <person name="Seki M."/>
            <person name="Sakurai T."/>
            <person name="Satou M."/>
            <person name="Tamse R."/>
            <person name="Vaysberg M."/>
            <person name="Wallender E.K."/>
            <person name="Wong C."/>
            <person name="Yamamura Y."/>
            <person name="Yuan S."/>
            <person name="Shinozaki K."/>
            <person name="Davis R.W."/>
            <person name="Theologis A."/>
            <person name="Ecker J.R."/>
        </authorList>
    </citation>
    <scope>NUCLEOTIDE SEQUENCE [LARGE SCALE MRNA]</scope>
    <source>
        <strain>cv. Columbia</strain>
    </source>
</reference>
<reference key="5">
    <citation type="journal article" date="2010" name="Cell Host Microbe">
        <title>Receptor-like cytoplasmic kinases integrate signaling from multiple plant immune receptors and are targeted by a Pseudomonas syringae effector.</title>
        <authorList>
            <person name="Zhang J."/>
            <person name="Li W."/>
            <person name="Xiang T."/>
            <person name="Liu Z."/>
            <person name="Laluk K."/>
            <person name="Ding X."/>
            <person name="Zou Y."/>
            <person name="Gao M."/>
            <person name="Zhang X."/>
            <person name="Chen S."/>
            <person name="Mengiste T."/>
            <person name="Zhang Y."/>
            <person name="Zhou J.M."/>
        </authorList>
    </citation>
    <scope>FUNCTION</scope>
    <scope>INTERACTION WITH FLS2</scope>
    <scope>INDUCTION BY FLAGELLIN</scope>
    <scope>GENE FAMILY</scope>
    <scope>NOMENCLATURE</scope>
    <scope>DISRUPTION PHENOTYPE</scope>
</reference>
<reference key="6">
    <citation type="journal article" date="2011" name="FEBS Lett.">
        <title>Protein N-acylation overrides differing targeting signals.</title>
        <authorList>
            <person name="Stael S."/>
            <person name="Bayer R.G."/>
            <person name="Mehlmer N."/>
            <person name="Teige M."/>
        </authorList>
    </citation>
    <scope>SUBCELLULAR LOCATION</scope>
    <scope>MUTAGENESIS OF GLY-2</scope>
    <scope>MYRISTOYLATION AT GLY-2</scope>
</reference>
<reference key="7">
    <citation type="journal article" date="2013" name="PLoS ONE">
        <title>xopAC-triggered immunity against Xanthomonas depends on Arabidopsis receptor-like cytoplasmic kinase genes PBL2 and RIPK.</title>
        <authorList>
            <person name="Guy E."/>
            <person name="Lautier M."/>
            <person name="Chabannes M."/>
            <person name="Roux B."/>
            <person name="Lauber E."/>
            <person name="Arlat M."/>
            <person name="Noel L.D."/>
        </authorList>
    </citation>
    <scope>FUNCTION</scope>
    <scope>INTERACTION WITH XANTHOMONAS CAMPESTRIS XOPAC/AVRAC</scope>
</reference>
<reference key="8">
    <citation type="journal article" date="2015" name="Cell Host Microbe">
        <title>The decoy substrate of a pathogen effector and a pseudokinase specify pathogen-induced modified-self recognition and immunity in plants.</title>
        <authorList>
            <person name="Wang G."/>
            <person name="Roux B."/>
            <person name="Feng F."/>
            <person name="Guy E."/>
            <person name="Li L."/>
            <person name="Li N."/>
            <person name="Zhang X."/>
            <person name="Lautier M."/>
            <person name="Jardinaud M.-F."/>
            <person name="Chabannes M."/>
            <person name="Arlat M."/>
            <person name="Chen S."/>
            <person name="He C."/>
            <person name="Noel L.D."/>
            <person name="Zhou J.-M."/>
        </authorList>
    </citation>
    <scope>FUNCTION</scope>
    <scope>MUTAGENESIS OF LYS-124; ASP-219; GLY-247; SER-253; THR-254 AND TYR-262</scope>
    <scope>DISRUPTION PHENOTYPE</scope>
    <scope>SUBUNIT</scope>
    <scope>URIDYLYLATION BY XANTHOMONAS CAMPESTRIS EFFECTOR AVRAC/XOPAC</scope>
    <scope>URIDYLYLATION AT SER-253 AND THR-254</scope>
    <scope>IDENTIFICATION BY MASS SPECTROMETRY</scope>
    <source>
        <strain>cv. Columbia</strain>
    </source>
</reference>
<reference key="9">
    <citation type="journal article" date="2019" name="Science">
        <title>Reconstitution and structure of a plant NLR resistosome conferring immunity.</title>
        <authorList>
            <person name="Wang J."/>
            <person name="Hu M."/>
            <person name="Wang J."/>
            <person name="Qi J."/>
            <person name="Han Z."/>
            <person name="Wang G."/>
            <person name="Qi Y."/>
            <person name="Wang H.-W."/>
            <person name="Zhou J.-M."/>
            <person name="Chai J."/>
        </authorList>
    </citation>
    <scope>STRUCTURE BY ELECTRON MICROSCOPY (3.40 ANGSTROMS) IN COMPLEX WITH ATP ANALOGS</scope>
    <scope>SUBUNIT</scope>
    <source>
        <strain>cv. Columbia</strain>
    </source>
</reference>
<reference key="10">
    <citation type="journal article" date="2019" name="Science">
        <title>Ligand-triggered allosteric ADP release primes a plant NLR complex.</title>
        <authorList>
            <person name="Wang J."/>
            <person name="Wang J."/>
            <person name="Hu M."/>
            <person name="Wu S."/>
            <person name="Qi J."/>
            <person name="Wang G."/>
            <person name="Han Z."/>
            <person name="Qi Y."/>
            <person name="Gao N."/>
            <person name="Wang H.-W."/>
            <person name="Zhou J.-M."/>
            <person name="Chai J."/>
        </authorList>
    </citation>
    <scope>STRUCTURE BY ELECTRON MICROSCOPY (3.90 ANGSTROMS) IN COMPLEX WITH ATP ANALOGS</scope>
    <scope>FUNCTION</scope>
    <scope>SUBUNIT</scope>
    <scope>URIDYLYLATION AT SER-253 AND THR-254</scope>
    <scope>INTERACTION WITH RKS1</scope>
    <source>
        <strain>cv. Columbia</strain>
    </source>
</reference>